<protein>
    <recommendedName>
        <fullName evidence="1">DNA mismatch repair protein MutS</fullName>
    </recommendedName>
</protein>
<feature type="chain" id="PRO_1000008085" description="DNA mismatch repair protein MutS">
    <location>
        <begin position="1"/>
        <end position="886"/>
    </location>
</feature>
<feature type="binding site" evidence="1">
    <location>
        <begin position="641"/>
        <end position="648"/>
    </location>
    <ligand>
        <name>ATP</name>
        <dbReference type="ChEBI" id="CHEBI:30616"/>
    </ligand>
</feature>
<accession>A8GMX2</accession>
<proteinExistence type="inferred from homology"/>
<sequence>MNIQEFKQKYNYDVATKMMQQYLDIKFAHLDCLLLFRMGDFYEMFYDDAILASNVLGIALTKRGKNGEEEIAMCGVPYHALEHYLTKLIEANYKVAICDQLETPEDAKNRGGYKAVVTRDVTRIITPGTIIEENLIASAEPNYLASLVIPQNKETASICYVDLSTSEIFVVNVPEAEILNELARLKPREILVSENLRSSNLADSIFKQLNFRITYQVDSCFAINKCKKIILDFYKMKDIKGIGEISSSQICVIGSILEYLSLTQKQNIPHLPIPRIINFHSYMTIDFSTRHNLAIVINSQGSSNGSLLNTINHTVTKQGGRLLYNFLSSPLTNIAKINHRLNITEFFYSNLEIVQRIRELLKKTSDIERCLTRITMNRSSGCDLLSIKYTLEAATIIKGVFFDAYGFNLPDFIEKIIKPLAGDAELYHLIDESIRADVPNNLNDGGIIKHEYHPKVAQLHDLINNRKLHIEKLKDQYRKETGIDSLKISHNNVIGLFIDITAKNVNKILDPKFIHRQTTVNNVRYTTTELQKLESELVNAKTLVISLEKALYADICSQVIKKAAYLRMLASSLSVLDVFCNFAYIADEYDYVKPELTDDLSFDIVKGRHPVVEKVLQRESKSFVYNDCHLSELKRIWLITGPNMAGKSTFLRQNAIIAIIAQIGSFVPAKSAKIGVVDKIFSRIGAADDLIKGQSTFMAEMLETSAILAQSTKNSLIILDEVGRGTSTYDGVSIAWSVLEYIHDKLKCRCLFATHYHELTVMNNFLPALQNYTIAIEESGKDILFLHNIISGAADRSYGIHVAALAGLPASVINRAEQILLKFEKTSTGKGKNILSTESNNLRLFNLEHNQTTIRSKLEEQFRTIDPDQLSPKAALELIYELKKLA</sequence>
<organism>
    <name type="scientific">Rickettsia akari (strain Hartford)</name>
    <dbReference type="NCBI Taxonomy" id="293614"/>
    <lineage>
        <taxon>Bacteria</taxon>
        <taxon>Pseudomonadati</taxon>
        <taxon>Pseudomonadota</taxon>
        <taxon>Alphaproteobacteria</taxon>
        <taxon>Rickettsiales</taxon>
        <taxon>Rickettsiaceae</taxon>
        <taxon>Rickettsieae</taxon>
        <taxon>Rickettsia</taxon>
        <taxon>spotted fever group</taxon>
    </lineage>
</organism>
<reference key="1">
    <citation type="submission" date="2007-09" db="EMBL/GenBank/DDBJ databases">
        <title>Complete genome sequence of Rickettsia akari.</title>
        <authorList>
            <person name="Madan A."/>
            <person name="Fahey J."/>
            <person name="Helton E."/>
            <person name="Ketteman M."/>
            <person name="Madan A."/>
            <person name="Rodrigues S."/>
            <person name="Sanchez A."/>
            <person name="Whiting M."/>
            <person name="Dasch G."/>
            <person name="Eremeeva M."/>
        </authorList>
    </citation>
    <scope>NUCLEOTIDE SEQUENCE [LARGE SCALE GENOMIC DNA]</scope>
    <source>
        <strain>Hartford</strain>
    </source>
</reference>
<name>MUTS_RICAH</name>
<evidence type="ECO:0000255" key="1">
    <source>
        <dbReference type="HAMAP-Rule" id="MF_00096"/>
    </source>
</evidence>
<gene>
    <name evidence="1" type="primary">mutS</name>
    <name type="ordered locus">A1C_02210</name>
</gene>
<comment type="function">
    <text evidence="1">This protein is involved in the repair of mismatches in DNA. It is possible that it carries out the mismatch recognition step. This protein has a weak ATPase activity.</text>
</comment>
<comment type="similarity">
    <text evidence="1">Belongs to the DNA mismatch repair MutS family.</text>
</comment>
<keyword id="KW-0067">ATP-binding</keyword>
<keyword id="KW-0227">DNA damage</keyword>
<keyword id="KW-0234">DNA repair</keyword>
<keyword id="KW-0238">DNA-binding</keyword>
<keyword id="KW-0547">Nucleotide-binding</keyword>
<dbReference type="EMBL" id="CP000847">
    <property type="protein sequence ID" value="ABV74747.1"/>
    <property type="molecule type" value="Genomic_DNA"/>
</dbReference>
<dbReference type="RefSeq" id="WP_012149381.1">
    <property type="nucleotide sequence ID" value="NC_009881.1"/>
</dbReference>
<dbReference type="SMR" id="A8GMX2"/>
<dbReference type="STRING" id="293614.A1C_02210"/>
<dbReference type="KEGG" id="rak:A1C_02210"/>
<dbReference type="eggNOG" id="COG0249">
    <property type="taxonomic scope" value="Bacteria"/>
</dbReference>
<dbReference type="HOGENOM" id="CLU_002472_3_1_5"/>
<dbReference type="Proteomes" id="UP000006830">
    <property type="component" value="Chromosome"/>
</dbReference>
<dbReference type="GO" id="GO:0005524">
    <property type="term" value="F:ATP binding"/>
    <property type="evidence" value="ECO:0007669"/>
    <property type="project" value="UniProtKB-UniRule"/>
</dbReference>
<dbReference type="GO" id="GO:0140664">
    <property type="term" value="F:ATP-dependent DNA damage sensor activity"/>
    <property type="evidence" value="ECO:0007669"/>
    <property type="project" value="InterPro"/>
</dbReference>
<dbReference type="GO" id="GO:0003684">
    <property type="term" value="F:damaged DNA binding"/>
    <property type="evidence" value="ECO:0007669"/>
    <property type="project" value="UniProtKB-UniRule"/>
</dbReference>
<dbReference type="GO" id="GO:0030983">
    <property type="term" value="F:mismatched DNA binding"/>
    <property type="evidence" value="ECO:0007669"/>
    <property type="project" value="InterPro"/>
</dbReference>
<dbReference type="GO" id="GO:0006298">
    <property type="term" value="P:mismatch repair"/>
    <property type="evidence" value="ECO:0007669"/>
    <property type="project" value="UniProtKB-UniRule"/>
</dbReference>
<dbReference type="CDD" id="cd03284">
    <property type="entry name" value="ABC_MutS1"/>
    <property type="match status" value="1"/>
</dbReference>
<dbReference type="FunFam" id="3.40.50.300:FF:001238">
    <property type="entry name" value="DNA mismatch repair protein"/>
    <property type="match status" value="1"/>
</dbReference>
<dbReference type="FunFam" id="3.40.1170.10:FF:000001">
    <property type="entry name" value="DNA mismatch repair protein MutS"/>
    <property type="match status" value="1"/>
</dbReference>
<dbReference type="Gene3D" id="1.10.1420.10">
    <property type="match status" value="2"/>
</dbReference>
<dbReference type="Gene3D" id="6.10.140.430">
    <property type="match status" value="1"/>
</dbReference>
<dbReference type="Gene3D" id="3.40.1170.10">
    <property type="entry name" value="DNA repair protein MutS, domain I"/>
    <property type="match status" value="1"/>
</dbReference>
<dbReference type="Gene3D" id="3.30.420.110">
    <property type="entry name" value="MutS, connector domain"/>
    <property type="match status" value="1"/>
</dbReference>
<dbReference type="Gene3D" id="3.40.50.300">
    <property type="entry name" value="P-loop containing nucleotide triphosphate hydrolases"/>
    <property type="match status" value="1"/>
</dbReference>
<dbReference type="HAMAP" id="MF_00096">
    <property type="entry name" value="MutS"/>
    <property type="match status" value="1"/>
</dbReference>
<dbReference type="InterPro" id="IPR005748">
    <property type="entry name" value="DNA_mismatch_repair_MutS"/>
</dbReference>
<dbReference type="InterPro" id="IPR007695">
    <property type="entry name" value="DNA_mismatch_repair_MutS-lik_N"/>
</dbReference>
<dbReference type="InterPro" id="IPR017261">
    <property type="entry name" value="DNA_mismatch_repair_MutS/MSH"/>
</dbReference>
<dbReference type="InterPro" id="IPR000432">
    <property type="entry name" value="DNA_mismatch_repair_MutS_C"/>
</dbReference>
<dbReference type="InterPro" id="IPR007861">
    <property type="entry name" value="DNA_mismatch_repair_MutS_clamp"/>
</dbReference>
<dbReference type="InterPro" id="IPR007696">
    <property type="entry name" value="DNA_mismatch_repair_MutS_core"/>
</dbReference>
<dbReference type="InterPro" id="IPR016151">
    <property type="entry name" value="DNA_mismatch_repair_MutS_N"/>
</dbReference>
<dbReference type="InterPro" id="IPR036187">
    <property type="entry name" value="DNA_mismatch_repair_MutS_sf"/>
</dbReference>
<dbReference type="InterPro" id="IPR007860">
    <property type="entry name" value="DNA_mmatch_repair_MutS_con_dom"/>
</dbReference>
<dbReference type="InterPro" id="IPR045076">
    <property type="entry name" value="MutS"/>
</dbReference>
<dbReference type="InterPro" id="IPR036678">
    <property type="entry name" value="MutS_con_dom_sf"/>
</dbReference>
<dbReference type="InterPro" id="IPR027417">
    <property type="entry name" value="P-loop_NTPase"/>
</dbReference>
<dbReference type="NCBIfam" id="TIGR01070">
    <property type="entry name" value="mutS1"/>
    <property type="match status" value="1"/>
</dbReference>
<dbReference type="NCBIfam" id="NF003810">
    <property type="entry name" value="PRK05399.1"/>
    <property type="match status" value="1"/>
</dbReference>
<dbReference type="PANTHER" id="PTHR11361:SF34">
    <property type="entry name" value="DNA MISMATCH REPAIR PROTEIN MSH1, MITOCHONDRIAL"/>
    <property type="match status" value="1"/>
</dbReference>
<dbReference type="PANTHER" id="PTHR11361">
    <property type="entry name" value="DNA MISMATCH REPAIR PROTEIN MUTS FAMILY MEMBER"/>
    <property type="match status" value="1"/>
</dbReference>
<dbReference type="Pfam" id="PF01624">
    <property type="entry name" value="MutS_I"/>
    <property type="match status" value="1"/>
</dbReference>
<dbReference type="Pfam" id="PF05188">
    <property type="entry name" value="MutS_II"/>
    <property type="match status" value="1"/>
</dbReference>
<dbReference type="Pfam" id="PF05192">
    <property type="entry name" value="MutS_III"/>
    <property type="match status" value="1"/>
</dbReference>
<dbReference type="Pfam" id="PF05190">
    <property type="entry name" value="MutS_IV"/>
    <property type="match status" value="1"/>
</dbReference>
<dbReference type="Pfam" id="PF00488">
    <property type="entry name" value="MutS_V"/>
    <property type="match status" value="1"/>
</dbReference>
<dbReference type="PIRSF" id="PIRSF037677">
    <property type="entry name" value="DNA_mis_repair_Msh6"/>
    <property type="match status" value="1"/>
</dbReference>
<dbReference type="SMART" id="SM00534">
    <property type="entry name" value="MUTSac"/>
    <property type="match status" value="1"/>
</dbReference>
<dbReference type="SMART" id="SM00533">
    <property type="entry name" value="MUTSd"/>
    <property type="match status" value="1"/>
</dbReference>
<dbReference type="SUPFAM" id="SSF55271">
    <property type="entry name" value="DNA repair protein MutS, domain I"/>
    <property type="match status" value="1"/>
</dbReference>
<dbReference type="SUPFAM" id="SSF53150">
    <property type="entry name" value="DNA repair protein MutS, domain II"/>
    <property type="match status" value="1"/>
</dbReference>
<dbReference type="SUPFAM" id="SSF48334">
    <property type="entry name" value="DNA repair protein MutS, domain III"/>
    <property type="match status" value="1"/>
</dbReference>
<dbReference type="SUPFAM" id="SSF52540">
    <property type="entry name" value="P-loop containing nucleoside triphosphate hydrolases"/>
    <property type="match status" value="1"/>
</dbReference>
<dbReference type="PROSITE" id="PS00486">
    <property type="entry name" value="DNA_MISMATCH_REPAIR_2"/>
    <property type="match status" value="1"/>
</dbReference>